<evidence type="ECO:0000250" key="1"/>
<evidence type="ECO:0000255" key="2"/>
<evidence type="ECO:0000269" key="3">
    <source>
    </source>
</evidence>
<evidence type="ECO:0000305" key="4"/>
<evidence type="ECO:0000305" key="5">
    <source>
    </source>
</evidence>
<sequence>MVVVVAAAMAAASLCCGVAAYLYYVLWLAPERLRAHLRRQGIGGPTPSFPYGNLADMRSHAAAAAGGKATGEGRQEGDIVHDYRQAVFPFYENWRKQYGPVFTYSVGNMVFLHVSRPDIVRELSLCVSLDLGKSSYMKATHQPLFGEGILKSNGNAWAHQRKLIAPEFFPDKVKGMVDLMVDSAQVLVSSWEDRIDRSGGNALDLMIDDDIRAYSADVISRTCFGSSYVKGKQIFDMIRELQKTVSTKKQNLLAEMTGLSFLFPKASGRAAWRLNGRVRALILDLVGENGEEDGGNLLSAMLRSARGGGGGGGEVAAAAEDFVVDNCKNIYFAGYESTAVTAAWCLMLLALHPEWQDRVRDEVQAACCGGGGRSPDFPALQKMKNLTMVIQETLRLYPAGAVVSRQALRELSLGGVRVPRGVNIYVPVSTLHLDAELWGGGAGAAEFDPARFADARPPLHAYLPFGAGARTCLGQTFAMAELKVLLSLVLCRFEVALSPEYVHSPAHKLIVEAEHGVRLVLKKVRSKCDWAGFD</sequence>
<protein>
    <recommendedName>
        <fullName>Cytochrome P450 714B1</fullName>
        <ecNumber>1.14.-.-</ecNumber>
    </recommendedName>
    <alternativeName>
        <fullName>GA 13-oxidase 1</fullName>
    </alternativeName>
    <alternativeName>
        <fullName>Gibberellin 13 oxidase 1</fullName>
    </alternativeName>
</protein>
<reference key="1">
    <citation type="journal article" date="2005" name="Nature">
        <title>The map-based sequence of the rice genome.</title>
        <authorList>
            <consortium name="International rice genome sequencing project (IRGSP)"/>
        </authorList>
    </citation>
    <scope>NUCLEOTIDE SEQUENCE [LARGE SCALE GENOMIC DNA]</scope>
    <source>
        <strain>cv. Nipponbare</strain>
    </source>
</reference>
<reference key="2">
    <citation type="journal article" date="2008" name="Nucleic Acids Res.">
        <title>The rice annotation project database (RAP-DB): 2008 update.</title>
        <authorList>
            <consortium name="The rice annotation project (RAP)"/>
        </authorList>
    </citation>
    <scope>GENOME REANNOTATION</scope>
    <source>
        <strain>cv. Nipponbare</strain>
    </source>
</reference>
<reference key="3">
    <citation type="journal article" date="2013" name="Rice">
        <title>Improvement of the Oryza sativa Nipponbare reference genome using next generation sequence and optical map data.</title>
        <authorList>
            <person name="Kawahara Y."/>
            <person name="de la Bastide M."/>
            <person name="Hamilton J.P."/>
            <person name="Kanamori H."/>
            <person name="McCombie W.R."/>
            <person name="Ouyang S."/>
            <person name="Schwartz D.C."/>
            <person name="Tanaka T."/>
            <person name="Wu J."/>
            <person name="Zhou S."/>
            <person name="Childs K.L."/>
            <person name="Davidson R.M."/>
            <person name="Lin H."/>
            <person name="Quesada-Ocampo L."/>
            <person name="Vaillancourt B."/>
            <person name="Sakai H."/>
            <person name="Lee S.S."/>
            <person name="Kim J."/>
            <person name="Numa H."/>
            <person name="Itoh T."/>
            <person name="Buell C.R."/>
            <person name="Matsumoto T."/>
        </authorList>
    </citation>
    <scope>GENOME REANNOTATION</scope>
    <source>
        <strain>cv. Nipponbare</strain>
    </source>
</reference>
<reference key="4">
    <citation type="journal article" date="2005" name="PLoS Biol.">
        <title>The genomes of Oryza sativa: a history of duplications.</title>
        <authorList>
            <person name="Yu J."/>
            <person name="Wang J."/>
            <person name="Lin W."/>
            <person name="Li S."/>
            <person name="Li H."/>
            <person name="Zhou J."/>
            <person name="Ni P."/>
            <person name="Dong W."/>
            <person name="Hu S."/>
            <person name="Zeng C."/>
            <person name="Zhang J."/>
            <person name="Zhang Y."/>
            <person name="Li R."/>
            <person name="Xu Z."/>
            <person name="Li S."/>
            <person name="Li X."/>
            <person name="Zheng H."/>
            <person name="Cong L."/>
            <person name="Lin L."/>
            <person name="Yin J."/>
            <person name="Geng J."/>
            <person name="Li G."/>
            <person name="Shi J."/>
            <person name="Liu J."/>
            <person name="Lv H."/>
            <person name="Li J."/>
            <person name="Wang J."/>
            <person name="Deng Y."/>
            <person name="Ran L."/>
            <person name="Shi X."/>
            <person name="Wang X."/>
            <person name="Wu Q."/>
            <person name="Li C."/>
            <person name="Ren X."/>
            <person name="Wang J."/>
            <person name="Wang X."/>
            <person name="Li D."/>
            <person name="Liu D."/>
            <person name="Zhang X."/>
            <person name="Ji Z."/>
            <person name="Zhao W."/>
            <person name="Sun Y."/>
            <person name="Zhang Z."/>
            <person name="Bao J."/>
            <person name="Han Y."/>
            <person name="Dong L."/>
            <person name="Ji J."/>
            <person name="Chen P."/>
            <person name="Wu S."/>
            <person name="Liu J."/>
            <person name="Xiao Y."/>
            <person name="Bu D."/>
            <person name="Tan J."/>
            <person name="Yang L."/>
            <person name="Ye C."/>
            <person name="Zhang J."/>
            <person name="Xu J."/>
            <person name="Zhou Y."/>
            <person name="Yu Y."/>
            <person name="Zhang B."/>
            <person name="Zhuang S."/>
            <person name="Wei H."/>
            <person name="Liu B."/>
            <person name="Lei M."/>
            <person name="Yu H."/>
            <person name="Li Y."/>
            <person name="Xu H."/>
            <person name="Wei S."/>
            <person name="He X."/>
            <person name="Fang L."/>
            <person name="Zhang Z."/>
            <person name="Zhang Y."/>
            <person name="Huang X."/>
            <person name="Su Z."/>
            <person name="Tong W."/>
            <person name="Li J."/>
            <person name="Tong Z."/>
            <person name="Li S."/>
            <person name="Ye J."/>
            <person name="Wang L."/>
            <person name="Fang L."/>
            <person name="Lei T."/>
            <person name="Chen C.-S."/>
            <person name="Chen H.-C."/>
            <person name="Xu Z."/>
            <person name="Li H."/>
            <person name="Huang H."/>
            <person name="Zhang F."/>
            <person name="Xu H."/>
            <person name="Li N."/>
            <person name="Zhao C."/>
            <person name="Li S."/>
            <person name="Dong L."/>
            <person name="Huang Y."/>
            <person name="Li L."/>
            <person name="Xi Y."/>
            <person name="Qi Q."/>
            <person name="Li W."/>
            <person name="Zhang B."/>
            <person name="Hu W."/>
            <person name="Zhang Y."/>
            <person name="Tian X."/>
            <person name="Jiao Y."/>
            <person name="Liang X."/>
            <person name="Jin J."/>
            <person name="Gao L."/>
            <person name="Zheng W."/>
            <person name="Hao B."/>
            <person name="Liu S.-M."/>
            <person name="Wang W."/>
            <person name="Yuan L."/>
            <person name="Cao M."/>
            <person name="McDermott J."/>
            <person name="Samudrala R."/>
            <person name="Wang J."/>
            <person name="Wong G.K.-S."/>
            <person name="Yang H."/>
        </authorList>
    </citation>
    <scope>NUCLEOTIDE SEQUENCE [LARGE SCALE GENOMIC DNA]</scope>
    <source>
        <strain>cv. Nipponbare</strain>
    </source>
</reference>
<reference key="5">
    <citation type="journal article" date="2013" name="Proc. Natl. Acad. Sci. U.S.A.">
        <title>CYP714B1 and CYP714B2 encode gibberellin 13-oxidases that reduce gibberellin activity in rice.</title>
        <authorList>
            <person name="Magome H."/>
            <person name="Nomura T."/>
            <person name="Hanada A."/>
            <person name="Takeda-Kamiya N."/>
            <person name="Ohnishi T."/>
            <person name="Shinma Y."/>
            <person name="Katsumata T."/>
            <person name="Kawaide H."/>
            <person name="Kamiya Y."/>
            <person name="Yamaguchi S."/>
        </authorList>
    </citation>
    <scope>FUNCTION</scope>
    <scope>TISSUE SPECIFICITY</scope>
    <scope>CATALYTIC ACTIVITY</scope>
    <scope>DISRUPTION PHENOTYPE</scope>
    <scope>INDUCTION BY GIBBERELLIN</scope>
</reference>
<feature type="chain" id="PRO_0000422412" description="Cytochrome P450 714B1">
    <location>
        <begin position="1"/>
        <end position="534"/>
    </location>
</feature>
<feature type="topological domain" description="Lumenal" evidence="2">
    <location>
        <position position="1"/>
    </location>
</feature>
<feature type="transmembrane region" description="Helical; Signal-anchor for type III membrane protein" evidence="2">
    <location>
        <begin position="2"/>
        <end position="22"/>
    </location>
</feature>
<feature type="topological domain" description="Cytoplasmic" evidence="2">
    <location>
        <begin position="23"/>
        <end position="534"/>
    </location>
</feature>
<feature type="binding site" description="axial binding residue" evidence="1">
    <location>
        <position position="472"/>
    </location>
    <ligand>
        <name>heme</name>
        <dbReference type="ChEBI" id="CHEBI:30413"/>
    </ligand>
    <ligandPart>
        <name>Fe</name>
        <dbReference type="ChEBI" id="CHEBI:18248"/>
    </ligandPart>
</feature>
<feature type="sequence conflict" description="In Ref. 4; EAZ41111." evidence="4" ref="4">
    <original>A</original>
    <variation>G</variation>
    <location>
        <position position="35"/>
    </location>
</feature>
<gene>
    <name type="primary">CYP714B1</name>
    <name type="ordered locus">Os07g0681300</name>
    <name type="ordered locus">LOC_Os07g48330</name>
    <name type="ORF">OsJ_25604</name>
    <name type="ORF">OSJNBa0008J01.23</name>
</gene>
<dbReference type="EC" id="1.14.-.-"/>
<dbReference type="EMBL" id="AP005099">
    <property type="protein sequence ID" value="BAC80012.1"/>
    <property type="status" value="ALT_INIT"/>
    <property type="molecule type" value="Genomic_DNA"/>
</dbReference>
<dbReference type="EMBL" id="AP008213">
    <property type="protein sequence ID" value="BAF22566.1"/>
    <property type="status" value="ALT_INIT"/>
    <property type="molecule type" value="Genomic_DNA"/>
</dbReference>
<dbReference type="EMBL" id="AP014963">
    <property type="protein sequence ID" value="BAT03245.1"/>
    <property type="molecule type" value="Genomic_DNA"/>
</dbReference>
<dbReference type="EMBL" id="CM000144">
    <property type="protein sequence ID" value="EAZ41111.1"/>
    <property type="status" value="ALT_SEQ"/>
    <property type="molecule type" value="Genomic_DNA"/>
</dbReference>
<dbReference type="RefSeq" id="XP_015645488.1">
    <property type="nucleotide sequence ID" value="XM_015790002.1"/>
</dbReference>
<dbReference type="SMR" id="Q7XHW5"/>
<dbReference type="FunCoup" id="Q7XHW5">
    <property type="interactions" value="189"/>
</dbReference>
<dbReference type="STRING" id="39947.Q7XHW5"/>
<dbReference type="PaxDb" id="39947-Q7XHW5"/>
<dbReference type="EnsemblPlants" id="Os07t0681300-01">
    <property type="protein sequence ID" value="Os07t0681300-01"/>
    <property type="gene ID" value="Os07g0681300"/>
</dbReference>
<dbReference type="Gramene" id="Os07t0681300-01">
    <property type="protein sequence ID" value="Os07t0681300-01"/>
    <property type="gene ID" value="Os07g0681300"/>
</dbReference>
<dbReference type="KEGG" id="dosa:Os07g0681300"/>
<dbReference type="eggNOG" id="KOG0157">
    <property type="taxonomic scope" value="Eukaryota"/>
</dbReference>
<dbReference type="HOGENOM" id="CLU_001570_5_0_1"/>
<dbReference type="InParanoid" id="Q7XHW5"/>
<dbReference type="OMA" id="NMVFLHV"/>
<dbReference type="OrthoDB" id="1470350at2759"/>
<dbReference type="BioCyc" id="MetaCyc:MONOMER-17926"/>
<dbReference type="Proteomes" id="UP000000763">
    <property type="component" value="Chromosome 7"/>
</dbReference>
<dbReference type="Proteomes" id="UP000007752">
    <property type="component" value="Chromosome 7"/>
</dbReference>
<dbReference type="Proteomes" id="UP000059680">
    <property type="component" value="Chromosome 7"/>
</dbReference>
<dbReference type="GO" id="GO:0016020">
    <property type="term" value="C:membrane"/>
    <property type="evidence" value="ECO:0007669"/>
    <property type="project" value="UniProtKB-SubCell"/>
</dbReference>
<dbReference type="GO" id="GO:0020037">
    <property type="term" value="F:heme binding"/>
    <property type="evidence" value="ECO:0007669"/>
    <property type="project" value="InterPro"/>
</dbReference>
<dbReference type="GO" id="GO:0005506">
    <property type="term" value="F:iron ion binding"/>
    <property type="evidence" value="ECO:0007669"/>
    <property type="project" value="InterPro"/>
</dbReference>
<dbReference type="GO" id="GO:0004497">
    <property type="term" value="F:monooxygenase activity"/>
    <property type="evidence" value="ECO:0000318"/>
    <property type="project" value="GO_Central"/>
</dbReference>
<dbReference type="GO" id="GO:0016705">
    <property type="term" value="F:oxidoreductase activity, acting on paired donors, with incorporation or reduction of molecular oxygen"/>
    <property type="evidence" value="ECO:0007669"/>
    <property type="project" value="InterPro"/>
</dbReference>
<dbReference type="GO" id="GO:0006629">
    <property type="term" value="P:lipid metabolic process"/>
    <property type="evidence" value="ECO:0007669"/>
    <property type="project" value="UniProtKB-ARBA"/>
</dbReference>
<dbReference type="CDD" id="cd20640">
    <property type="entry name" value="CYP714"/>
    <property type="match status" value="1"/>
</dbReference>
<dbReference type="Gene3D" id="1.10.630.10">
    <property type="entry name" value="Cytochrome P450"/>
    <property type="match status" value="1"/>
</dbReference>
<dbReference type="InterPro" id="IPR001128">
    <property type="entry name" value="Cyt_P450"/>
</dbReference>
<dbReference type="InterPro" id="IPR017972">
    <property type="entry name" value="Cyt_P450_CS"/>
</dbReference>
<dbReference type="InterPro" id="IPR002401">
    <property type="entry name" value="Cyt_P450_E_grp-I"/>
</dbReference>
<dbReference type="InterPro" id="IPR036396">
    <property type="entry name" value="Cyt_P450_sf"/>
</dbReference>
<dbReference type="InterPro" id="IPR050665">
    <property type="entry name" value="Cytochrome_P450_Monooxygen"/>
</dbReference>
<dbReference type="PANTHER" id="PTHR24282:SF36">
    <property type="entry name" value="CYTOCHROME P450 714A1-RELATED"/>
    <property type="match status" value="1"/>
</dbReference>
<dbReference type="PANTHER" id="PTHR24282">
    <property type="entry name" value="CYTOCHROME P450 FAMILY MEMBER"/>
    <property type="match status" value="1"/>
</dbReference>
<dbReference type="Pfam" id="PF00067">
    <property type="entry name" value="p450"/>
    <property type="match status" value="1"/>
</dbReference>
<dbReference type="PRINTS" id="PR00463">
    <property type="entry name" value="EP450I"/>
</dbReference>
<dbReference type="PRINTS" id="PR00385">
    <property type="entry name" value="P450"/>
</dbReference>
<dbReference type="SUPFAM" id="SSF48264">
    <property type="entry name" value="Cytochrome P450"/>
    <property type="match status" value="1"/>
</dbReference>
<dbReference type="PROSITE" id="PS00086">
    <property type="entry name" value="CYTOCHROME_P450"/>
    <property type="match status" value="1"/>
</dbReference>
<proteinExistence type="evidence at protein level"/>
<comment type="function">
    <text evidence="3">Catalyzes the 13-hydroxylation of gibberellins (GAs). Determines the ratio of GA4 and GA1. Converts GA12 into GA53.</text>
</comment>
<comment type="cofactor">
    <cofactor evidence="1">
        <name>heme</name>
        <dbReference type="ChEBI" id="CHEBI:30413"/>
    </cofactor>
</comment>
<comment type="subcellular location">
    <subcellularLocation>
        <location evidence="4">Membrane</location>
        <topology evidence="4">Single-pass type III membrane protein</topology>
    </subcellularLocation>
</comment>
<comment type="tissue specificity">
    <text evidence="3">Highly expressed in spikelet and uppermost internode. Detected in shoots, roots, leaves and anthers.</text>
</comment>
<comment type="induction">
    <text evidence="3">Up-regulated by bioactive gibberellins.</text>
</comment>
<comment type="disruption phenotype">
    <text evidence="3">No visible phenotype and no change in the levels of 13-OH GAs; due to the redundancy with CYP714B2. Cyp714b1 and cyp714b2 double mutants have decreased levels of 13-OH GAs, increased levels of 13-H GAs, including GA4, and longer uppermost internode.</text>
</comment>
<comment type="miscellaneous">
    <text evidence="5">Overexpression of CYP714B1 in a heterologous system causes semi-dwarfism and increased 13-OH GAs content.</text>
</comment>
<comment type="similarity">
    <text evidence="4">Belongs to the cytochrome P450 family.</text>
</comment>
<comment type="sequence caution" evidence="4">
    <conflict type="erroneous initiation">
        <sequence resource="EMBL-CDS" id="BAC80012"/>
    </conflict>
    <text>Truncated N-terminus.</text>
</comment>
<comment type="sequence caution" evidence="4">
    <conflict type="erroneous initiation">
        <sequence resource="EMBL-CDS" id="BAF22566"/>
    </conflict>
    <text>Truncated N-terminus.</text>
</comment>
<comment type="sequence caution" evidence="4">
    <conflict type="erroneous gene model prediction">
        <sequence resource="EMBL-CDS" id="EAZ41111"/>
    </conflict>
</comment>
<name>C14B1_ORYSJ</name>
<organism>
    <name type="scientific">Oryza sativa subsp. japonica</name>
    <name type="common">Rice</name>
    <dbReference type="NCBI Taxonomy" id="39947"/>
    <lineage>
        <taxon>Eukaryota</taxon>
        <taxon>Viridiplantae</taxon>
        <taxon>Streptophyta</taxon>
        <taxon>Embryophyta</taxon>
        <taxon>Tracheophyta</taxon>
        <taxon>Spermatophyta</taxon>
        <taxon>Magnoliopsida</taxon>
        <taxon>Liliopsida</taxon>
        <taxon>Poales</taxon>
        <taxon>Poaceae</taxon>
        <taxon>BOP clade</taxon>
        <taxon>Oryzoideae</taxon>
        <taxon>Oryzeae</taxon>
        <taxon>Oryzinae</taxon>
        <taxon>Oryza</taxon>
        <taxon>Oryza sativa</taxon>
    </lineage>
</organism>
<keyword id="KW-0349">Heme</keyword>
<keyword id="KW-0408">Iron</keyword>
<keyword id="KW-0472">Membrane</keyword>
<keyword id="KW-0479">Metal-binding</keyword>
<keyword id="KW-0503">Monooxygenase</keyword>
<keyword id="KW-0560">Oxidoreductase</keyword>
<keyword id="KW-1185">Reference proteome</keyword>
<keyword id="KW-0735">Signal-anchor</keyword>
<keyword id="KW-0812">Transmembrane</keyword>
<keyword id="KW-1133">Transmembrane helix</keyword>
<accession>Q7XHW5</accession>
<accession>A0A0P0XA58</accession>
<accession>A3BNH2</accession>